<evidence type="ECO:0000255" key="1">
    <source>
        <dbReference type="HAMAP-Rule" id="MF_00122"/>
    </source>
</evidence>
<accession>B8GCI2</accession>
<sequence>MSLSEAQVRHVARLARIALSDEEVNVMRAQLSAILDYIAMLQEVDVSNVPPTAQVTGLTTVWRPDVVGEMLTQEQALANAPDQQDGMFRVRAVFEE</sequence>
<keyword id="KW-0067">ATP-binding</keyword>
<keyword id="KW-0436">Ligase</keyword>
<keyword id="KW-0547">Nucleotide-binding</keyword>
<keyword id="KW-0648">Protein biosynthesis</keyword>
<dbReference type="EC" id="6.3.5.-" evidence="1"/>
<dbReference type="EMBL" id="CP001337">
    <property type="protein sequence ID" value="ACL25026.1"/>
    <property type="molecule type" value="Genomic_DNA"/>
</dbReference>
<dbReference type="RefSeq" id="WP_015940884.1">
    <property type="nucleotide sequence ID" value="NC_011831.1"/>
</dbReference>
<dbReference type="SMR" id="B8GCI2"/>
<dbReference type="STRING" id="326427.Cagg_2142"/>
<dbReference type="KEGG" id="cag:Cagg_2142"/>
<dbReference type="eggNOG" id="COG0721">
    <property type="taxonomic scope" value="Bacteria"/>
</dbReference>
<dbReference type="HOGENOM" id="CLU_105899_1_0_0"/>
<dbReference type="OrthoDB" id="9813938at2"/>
<dbReference type="Proteomes" id="UP000002508">
    <property type="component" value="Chromosome"/>
</dbReference>
<dbReference type="GO" id="GO:0050566">
    <property type="term" value="F:asparaginyl-tRNA synthase (glutamine-hydrolyzing) activity"/>
    <property type="evidence" value="ECO:0007669"/>
    <property type="project" value="RHEA"/>
</dbReference>
<dbReference type="GO" id="GO:0005524">
    <property type="term" value="F:ATP binding"/>
    <property type="evidence" value="ECO:0007669"/>
    <property type="project" value="UniProtKB-KW"/>
</dbReference>
<dbReference type="GO" id="GO:0050567">
    <property type="term" value="F:glutaminyl-tRNA synthase (glutamine-hydrolyzing) activity"/>
    <property type="evidence" value="ECO:0007669"/>
    <property type="project" value="UniProtKB-UniRule"/>
</dbReference>
<dbReference type="GO" id="GO:0070681">
    <property type="term" value="P:glutaminyl-tRNAGln biosynthesis via transamidation"/>
    <property type="evidence" value="ECO:0007669"/>
    <property type="project" value="TreeGrafter"/>
</dbReference>
<dbReference type="GO" id="GO:0006450">
    <property type="term" value="P:regulation of translational fidelity"/>
    <property type="evidence" value="ECO:0007669"/>
    <property type="project" value="InterPro"/>
</dbReference>
<dbReference type="GO" id="GO:0006412">
    <property type="term" value="P:translation"/>
    <property type="evidence" value="ECO:0007669"/>
    <property type="project" value="UniProtKB-UniRule"/>
</dbReference>
<dbReference type="Gene3D" id="1.10.20.60">
    <property type="entry name" value="Glu-tRNAGln amidotransferase C subunit, N-terminal domain"/>
    <property type="match status" value="1"/>
</dbReference>
<dbReference type="HAMAP" id="MF_00122">
    <property type="entry name" value="GatC"/>
    <property type="match status" value="1"/>
</dbReference>
<dbReference type="InterPro" id="IPR036113">
    <property type="entry name" value="Asp/Glu-ADT_sf_sub_c"/>
</dbReference>
<dbReference type="InterPro" id="IPR003837">
    <property type="entry name" value="GatC"/>
</dbReference>
<dbReference type="NCBIfam" id="TIGR00135">
    <property type="entry name" value="gatC"/>
    <property type="match status" value="1"/>
</dbReference>
<dbReference type="PANTHER" id="PTHR15004">
    <property type="entry name" value="GLUTAMYL-TRNA(GLN) AMIDOTRANSFERASE SUBUNIT C, MITOCHONDRIAL"/>
    <property type="match status" value="1"/>
</dbReference>
<dbReference type="PANTHER" id="PTHR15004:SF0">
    <property type="entry name" value="GLUTAMYL-TRNA(GLN) AMIDOTRANSFERASE SUBUNIT C, MITOCHONDRIAL"/>
    <property type="match status" value="1"/>
</dbReference>
<dbReference type="Pfam" id="PF02686">
    <property type="entry name" value="GatC"/>
    <property type="match status" value="1"/>
</dbReference>
<dbReference type="SUPFAM" id="SSF141000">
    <property type="entry name" value="Glu-tRNAGln amidotransferase C subunit"/>
    <property type="match status" value="1"/>
</dbReference>
<comment type="function">
    <text evidence="1">Allows the formation of correctly charged Asn-tRNA(Asn) or Gln-tRNA(Gln) through the transamidation of misacylated Asp-tRNA(Asn) or Glu-tRNA(Gln) in organisms which lack either or both of asparaginyl-tRNA or glutaminyl-tRNA synthetases. The reaction takes place in the presence of glutamine and ATP through an activated phospho-Asp-tRNA(Asn) or phospho-Glu-tRNA(Gln).</text>
</comment>
<comment type="catalytic activity">
    <reaction evidence="1">
        <text>L-glutamyl-tRNA(Gln) + L-glutamine + ATP + H2O = L-glutaminyl-tRNA(Gln) + L-glutamate + ADP + phosphate + H(+)</text>
        <dbReference type="Rhea" id="RHEA:17521"/>
        <dbReference type="Rhea" id="RHEA-COMP:9681"/>
        <dbReference type="Rhea" id="RHEA-COMP:9684"/>
        <dbReference type="ChEBI" id="CHEBI:15377"/>
        <dbReference type="ChEBI" id="CHEBI:15378"/>
        <dbReference type="ChEBI" id="CHEBI:29985"/>
        <dbReference type="ChEBI" id="CHEBI:30616"/>
        <dbReference type="ChEBI" id="CHEBI:43474"/>
        <dbReference type="ChEBI" id="CHEBI:58359"/>
        <dbReference type="ChEBI" id="CHEBI:78520"/>
        <dbReference type="ChEBI" id="CHEBI:78521"/>
        <dbReference type="ChEBI" id="CHEBI:456216"/>
    </reaction>
</comment>
<comment type="catalytic activity">
    <reaction evidence="1">
        <text>L-aspartyl-tRNA(Asn) + L-glutamine + ATP + H2O = L-asparaginyl-tRNA(Asn) + L-glutamate + ADP + phosphate + 2 H(+)</text>
        <dbReference type="Rhea" id="RHEA:14513"/>
        <dbReference type="Rhea" id="RHEA-COMP:9674"/>
        <dbReference type="Rhea" id="RHEA-COMP:9677"/>
        <dbReference type="ChEBI" id="CHEBI:15377"/>
        <dbReference type="ChEBI" id="CHEBI:15378"/>
        <dbReference type="ChEBI" id="CHEBI:29985"/>
        <dbReference type="ChEBI" id="CHEBI:30616"/>
        <dbReference type="ChEBI" id="CHEBI:43474"/>
        <dbReference type="ChEBI" id="CHEBI:58359"/>
        <dbReference type="ChEBI" id="CHEBI:78515"/>
        <dbReference type="ChEBI" id="CHEBI:78516"/>
        <dbReference type="ChEBI" id="CHEBI:456216"/>
    </reaction>
</comment>
<comment type="subunit">
    <text evidence="1">Heterotrimer of A, B and C subunits.</text>
</comment>
<comment type="similarity">
    <text evidence="1">Belongs to the GatC family.</text>
</comment>
<protein>
    <recommendedName>
        <fullName evidence="1">Aspartyl/glutamyl-tRNA(Asn/Gln) amidotransferase subunit C</fullName>
        <shortName evidence="1">Asp/Glu-ADT subunit C</shortName>
        <ecNumber evidence="1">6.3.5.-</ecNumber>
    </recommendedName>
</protein>
<feature type="chain" id="PRO_1000122559" description="Aspartyl/glutamyl-tRNA(Asn/Gln) amidotransferase subunit C">
    <location>
        <begin position="1"/>
        <end position="96"/>
    </location>
</feature>
<reference key="1">
    <citation type="submission" date="2008-12" db="EMBL/GenBank/DDBJ databases">
        <title>Complete sequence of Chloroflexus aggregans DSM 9485.</title>
        <authorList>
            <consortium name="US DOE Joint Genome Institute"/>
            <person name="Lucas S."/>
            <person name="Copeland A."/>
            <person name="Lapidus A."/>
            <person name="Glavina del Rio T."/>
            <person name="Dalin E."/>
            <person name="Tice H."/>
            <person name="Pitluck S."/>
            <person name="Foster B."/>
            <person name="Larimer F."/>
            <person name="Land M."/>
            <person name="Hauser L."/>
            <person name="Kyrpides N."/>
            <person name="Mikhailova N."/>
            <person name="Bryant D.A."/>
            <person name="Richardson P."/>
        </authorList>
    </citation>
    <scope>NUCLEOTIDE SEQUENCE [LARGE SCALE GENOMIC DNA]</scope>
    <source>
        <strain>MD-66 / DSM 9485</strain>
    </source>
</reference>
<organism>
    <name type="scientific">Chloroflexus aggregans (strain MD-66 / DSM 9485)</name>
    <dbReference type="NCBI Taxonomy" id="326427"/>
    <lineage>
        <taxon>Bacteria</taxon>
        <taxon>Bacillati</taxon>
        <taxon>Chloroflexota</taxon>
        <taxon>Chloroflexia</taxon>
        <taxon>Chloroflexales</taxon>
        <taxon>Chloroflexineae</taxon>
        <taxon>Chloroflexaceae</taxon>
        <taxon>Chloroflexus</taxon>
    </lineage>
</organism>
<gene>
    <name evidence="1" type="primary">gatC</name>
    <name type="ordered locus">Cagg_2142</name>
</gene>
<proteinExistence type="inferred from homology"/>
<name>GATC_CHLAD</name>